<evidence type="ECO:0000255" key="1">
    <source>
        <dbReference type="HAMAP-Rule" id="MF_00272"/>
    </source>
</evidence>
<evidence type="ECO:0000255" key="2">
    <source>
        <dbReference type="PROSITE-ProRule" id="PRU01066"/>
    </source>
</evidence>
<keyword id="KW-0450">Lipoyl</keyword>
<sequence>MSLPKDLLYTEEHEWVKADEGSYVIGITDFAQDQLGDIVFVELPEVGDTVAKGDSIGSIESVKTVSDFYAPVTGKVVAVNETLEDEPELINSNPYDTGWILKLEEVEEADVKALLSSDDYEKVLD</sequence>
<protein>
    <recommendedName>
        <fullName evidence="1">Glycine cleavage system H protein</fullName>
    </recommendedName>
    <alternativeName>
        <fullName evidence="1">Octanoyl/lipoyl carrier protein</fullName>
    </alternativeName>
</protein>
<feature type="chain" id="PRO_1000204748" description="Glycine cleavage system H protein">
    <location>
        <begin position="1"/>
        <end position="125"/>
    </location>
</feature>
<feature type="domain" description="Lipoyl-binding" evidence="2">
    <location>
        <begin position="22"/>
        <end position="104"/>
    </location>
</feature>
<feature type="modified residue" description="N6-lipoyllysine" evidence="1">
    <location>
        <position position="63"/>
    </location>
</feature>
<name>GCSH_LISMC</name>
<reference key="1">
    <citation type="journal article" date="2012" name="BMC Genomics">
        <title>Comparative genomics and transcriptomics of lineages I, II, and III strains of Listeria monocytogenes.</title>
        <authorList>
            <person name="Hain T."/>
            <person name="Ghai R."/>
            <person name="Billion A."/>
            <person name="Kuenne C.T."/>
            <person name="Steinweg C."/>
            <person name="Izar B."/>
            <person name="Mohamed W."/>
            <person name="Mraheil M."/>
            <person name="Domann E."/>
            <person name="Schaffrath S."/>
            <person name="Karst U."/>
            <person name="Goesmann A."/>
            <person name="Oehm S."/>
            <person name="Puhler A."/>
            <person name="Merkl R."/>
            <person name="Vorwerk S."/>
            <person name="Glaser P."/>
            <person name="Garrido P."/>
            <person name="Rusniok C."/>
            <person name="Buchrieser C."/>
            <person name="Goebel W."/>
            <person name="Chakraborty T."/>
        </authorList>
    </citation>
    <scope>NUCLEOTIDE SEQUENCE [LARGE SCALE GENOMIC DNA]</scope>
    <source>
        <strain>CLIP80459</strain>
    </source>
</reference>
<organism>
    <name type="scientific">Listeria monocytogenes serotype 4b (strain CLIP80459)</name>
    <dbReference type="NCBI Taxonomy" id="568819"/>
    <lineage>
        <taxon>Bacteria</taxon>
        <taxon>Bacillati</taxon>
        <taxon>Bacillota</taxon>
        <taxon>Bacilli</taxon>
        <taxon>Bacillales</taxon>
        <taxon>Listeriaceae</taxon>
        <taxon>Listeria</taxon>
    </lineage>
</organism>
<comment type="function">
    <text evidence="1">The glycine cleavage system catalyzes the degradation of glycine. The H protein shuttles the methylamine group of glycine from the P protein to the T protein.</text>
</comment>
<comment type="function">
    <text evidence="1">Is also involved in protein lipoylation via its role as an octanoyl/lipoyl carrier protein intermediate.</text>
</comment>
<comment type="cofactor">
    <cofactor evidence="1">
        <name>(R)-lipoate</name>
        <dbReference type="ChEBI" id="CHEBI:83088"/>
    </cofactor>
    <text evidence="1">Binds 1 lipoyl cofactor covalently.</text>
</comment>
<comment type="subunit">
    <text evidence="1">The glycine cleavage system is composed of four proteins: P, T, L and H.</text>
</comment>
<comment type="similarity">
    <text evidence="1">Belongs to the GcvH family.</text>
</comment>
<proteinExistence type="inferred from homology"/>
<gene>
    <name evidence="1" type="primary">gcvH</name>
    <name type="ordered locus">Lm4b_02393</name>
</gene>
<accession>C1KY63</accession>
<dbReference type="EMBL" id="FM242711">
    <property type="protein sequence ID" value="CAS06148.1"/>
    <property type="molecule type" value="Genomic_DNA"/>
</dbReference>
<dbReference type="RefSeq" id="WP_003725610.1">
    <property type="nucleotide sequence ID" value="NC_012488.1"/>
</dbReference>
<dbReference type="SMR" id="C1KY63"/>
<dbReference type="KEGG" id="lmc:Lm4b_02393"/>
<dbReference type="HOGENOM" id="CLU_097408_2_0_9"/>
<dbReference type="GO" id="GO:0005829">
    <property type="term" value="C:cytosol"/>
    <property type="evidence" value="ECO:0007669"/>
    <property type="project" value="TreeGrafter"/>
</dbReference>
<dbReference type="GO" id="GO:0005960">
    <property type="term" value="C:glycine cleavage complex"/>
    <property type="evidence" value="ECO:0007669"/>
    <property type="project" value="InterPro"/>
</dbReference>
<dbReference type="GO" id="GO:0019464">
    <property type="term" value="P:glycine decarboxylation via glycine cleavage system"/>
    <property type="evidence" value="ECO:0007669"/>
    <property type="project" value="UniProtKB-UniRule"/>
</dbReference>
<dbReference type="CDD" id="cd06848">
    <property type="entry name" value="GCS_H"/>
    <property type="match status" value="1"/>
</dbReference>
<dbReference type="Gene3D" id="2.40.50.100">
    <property type="match status" value="1"/>
</dbReference>
<dbReference type="HAMAP" id="MF_00272">
    <property type="entry name" value="GcvH"/>
    <property type="match status" value="1"/>
</dbReference>
<dbReference type="InterPro" id="IPR003016">
    <property type="entry name" value="2-oxoA_DH_lipoyl-BS"/>
</dbReference>
<dbReference type="InterPro" id="IPR000089">
    <property type="entry name" value="Biotin_lipoyl"/>
</dbReference>
<dbReference type="InterPro" id="IPR002930">
    <property type="entry name" value="GCV_H"/>
</dbReference>
<dbReference type="InterPro" id="IPR033753">
    <property type="entry name" value="GCV_H/Fam206"/>
</dbReference>
<dbReference type="InterPro" id="IPR017453">
    <property type="entry name" value="GCV_H_sub"/>
</dbReference>
<dbReference type="InterPro" id="IPR011053">
    <property type="entry name" value="Single_hybrid_motif"/>
</dbReference>
<dbReference type="NCBIfam" id="TIGR00527">
    <property type="entry name" value="gcvH"/>
    <property type="match status" value="1"/>
</dbReference>
<dbReference type="NCBIfam" id="NF002270">
    <property type="entry name" value="PRK01202.1"/>
    <property type="match status" value="1"/>
</dbReference>
<dbReference type="PANTHER" id="PTHR11715">
    <property type="entry name" value="GLYCINE CLEAVAGE SYSTEM H PROTEIN"/>
    <property type="match status" value="1"/>
</dbReference>
<dbReference type="PANTHER" id="PTHR11715:SF3">
    <property type="entry name" value="GLYCINE CLEAVAGE SYSTEM H PROTEIN-RELATED"/>
    <property type="match status" value="1"/>
</dbReference>
<dbReference type="Pfam" id="PF01597">
    <property type="entry name" value="GCV_H"/>
    <property type="match status" value="1"/>
</dbReference>
<dbReference type="SUPFAM" id="SSF51230">
    <property type="entry name" value="Single hybrid motif"/>
    <property type="match status" value="1"/>
</dbReference>
<dbReference type="PROSITE" id="PS50968">
    <property type="entry name" value="BIOTINYL_LIPOYL"/>
    <property type="match status" value="1"/>
</dbReference>
<dbReference type="PROSITE" id="PS00189">
    <property type="entry name" value="LIPOYL"/>
    <property type="match status" value="1"/>
</dbReference>